<comment type="function">
    <text evidence="1">Cell division factor that enhances FtsZ-ring assembly. Directly interacts with FtsZ and promotes bundling of FtsZ protofilaments, with a reduction in FtsZ GTPase activity.</text>
</comment>
<comment type="subunit">
    <text evidence="1">Interacts with FtsZ.</text>
</comment>
<comment type="subcellular location">
    <subcellularLocation>
        <location evidence="1">Cytoplasm</location>
    </subcellularLocation>
    <text evidence="1">Localizes to mid-cell in an FtsZ-dependent manner.</text>
</comment>
<comment type="similarity">
    <text evidence="1">Belongs to the ZapD family.</text>
</comment>
<sequence>MSDLTSTILFEHPLNEKMRTWLRMEFLLQQLESHRSLDNIANALTFFRTASDLIDVLERGEVRTDLLKELERQQQKLQQWADIPGVDVSLVDSLRNQLKSRAAVLMSAPRIGQSLKEDRLISVVRQRLSIPGGCCSFDLPTLHVWLHQPSEQRDQHINKLLASLAPLHQSLTIILDLIRQSCPLRSQISLNGFFQDNAGGADLLRLRLPLDPQLYPQISGHKTRYAIRFLALDSENGTVPARLSFELACC</sequence>
<keyword id="KW-0131">Cell cycle</keyword>
<keyword id="KW-0132">Cell division</keyword>
<keyword id="KW-0963">Cytoplasm</keyword>
<keyword id="KW-0717">Septation</keyword>
<name>ZAPD_YERPG</name>
<dbReference type="EMBL" id="CP000901">
    <property type="protein sequence ID" value="ABX87547.1"/>
    <property type="molecule type" value="Genomic_DNA"/>
</dbReference>
<dbReference type="RefSeq" id="WP_002209318.1">
    <property type="nucleotide sequence ID" value="NZ_CP009935.1"/>
</dbReference>
<dbReference type="SMR" id="A9R1J6"/>
<dbReference type="GeneID" id="57975279"/>
<dbReference type="KEGG" id="ypg:YpAngola_A1046"/>
<dbReference type="PATRIC" id="fig|349746.12.peg.1992"/>
<dbReference type="GO" id="GO:0032153">
    <property type="term" value="C:cell division site"/>
    <property type="evidence" value="ECO:0007669"/>
    <property type="project" value="TreeGrafter"/>
</dbReference>
<dbReference type="GO" id="GO:0005737">
    <property type="term" value="C:cytoplasm"/>
    <property type="evidence" value="ECO:0007669"/>
    <property type="project" value="UniProtKB-SubCell"/>
</dbReference>
<dbReference type="GO" id="GO:0000917">
    <property type="term" value="P:division septum assembly"/>
    <property type="evidence" value="ECO:0007669"/>
    <property type="project" value="UniProtKB-KW"/>
</dbReference>
<dbReference type="GO" id="GO:0043093">
    <property type="term" value="P:FtsZ-dependent cytokinesis"/>
    <property type="evidence" value="ECO:0007669"/>
    <property type="project" value="UniProtKB-UniRule"/>
</dbReference>
<dbReference type="FunFam" id="1.10.3900.10:FF:000001">
    <property type="entry name" value="Cell division protein ZapD"/>
    <property type="match status" value="1"/>
</dbReference>
<dbReference type="FunFam" id="2.60.440.10:FF:000001">
    <property type="entry name" value="Cell division protein ZapD"/>
    <property type="match status" value="1"/>
</dbReference>
<dbReference type="Gene3D" id="1.10.3900.10">
    <property type="entry name" value="YacF-like"/>
    <property type="match status" value="1"/>
</dbReference>
<dbReference type="Gene3D" id="2.60.440.10">
    <property type="entry name" value="YacF-like domains"/>
    <property type="match status" value="1"/>
</dbReference>
<dbReference type="HAMAP" id="MF_01092">
    <property type="entry name" value="ZapD"/>
    <property type="match status" value="1"/>
</dbReference>
<dbReference type="InterPro" id="IPR009777">
    <property type="entry name" value="ZapD"/>
</dbReference>
<dbReference type="InterPro" id="IPR027462">
    <property type="entry name" value="ZapD_C"/>
</dbReference>
<dbReference type="InterPro" id="IPR036268">
    <property type="entry name" value="ZapD_sf"/>
</dbReference>
<dbReference type="NCBIfam" id="NF003653">
    <property type="entry name" value="PRK05287.1-1"/>
    <property type="match status" value="1"/>
</dbReference>
<dbReference type="NCBIfam" id="NF003655">
    <property type="entry name" value="PRK05287.1-3"/>
    <property type="match status" value="1"/>
</dbReference>
<dbReference type="PANTHER" id="PTHR39455">
    <property type="entry name" value="CELL DIVISION PROTEIN ZAPD"/>
    <property type="match status" value="1"/>
</dbReference>
<dbReference type="PANTHER" id="PTHR39455:SF1">
    <property type="entry name" value="CELL DIVISION PROTEIN ZAPD"/>
    <property type="match status" value="1"/>
</dbReference>
<dbReference type="Pfam" id="PF07072">
    <property type="entry name" value="ZapD"/>
    <property type="match status" value="1"/>
</dbReference>
<dbReference type="SUPFAM" id="SSF160950">
    <property type="entry name" value="YacF-like"/>
    <property type="match status" value="1"/>
</dbReference>
<feature type="chain" id="PRO_1000136958" description="Cell division protein ZapD">
    <location>
        <begin position="1"/>
        <end position="250"/>
    </location>
</feature>
<gene>
    <name evidence="1" type="primary">zapD</name>
    <name type="ordered locus">YpAngola_A1046</name>
</gene>
<proteinExistence type="inferred from homology"/>
<protein>
    <recommendedName>
        <fullName evidence="1">Cell division protein ZapD</fullName>
    </recommendedName>
    <alternativeName>
        <fullName evidence="1">Z ring-associated protein D</fullName>
    </alternativeName>
</protein>
<accession>A9R1J6</accession>
<organism>
    <name type="scientific">Yersinia pestis bv. Antiqua (strain Angola)</name>
    <dbReference type="NCBI Taxonomy" id="349746"/>
    <lineage>
        <taxon>Bacteria</taxon>
        <taxon>Pseudomonadati</taxon>
        <taxon>Pseudomonadota</taxon>
        <taxon>Gammaproteobacteria</taxon>
        <taxon>Enterobacterales</taxon>
        <taxon>Yersiniaceae</taxon>
        <taxon>Yersinia</taxon>
    </lineage>
</organism>
<evidence type="ECO:0000255" key="1">
    <source>
        <dbReference type="HAMAP-Rule" id="MF_01092"/>
    </source>
</evidence>
<reference key="1">
    <citation type="journal article" date="2010" name="J. Bacteriol.">
        <title>Genome sequence of the deep-rooted Yersinia pestis strain Angola reveals new insights into the evolution and pangenome of the plague bacterium.</title>
        <authorList>
            <person name="Eppinger M."/>
            <person name="Worsham P.L."/>
            <person name="Nikolich M.P."/>
            <person name="Riley D.R."/>
            <person name="Sebastian Y."/>
            <person name="Mou S."/>
            <person name="Achtman M."/>
            <person name="Lindler L.E."/>
            <person name="Ravel J."/>
        </authorList>
    </citation>
    <scope>NUCLEOTIDE SEQUENCE [LARGE SCALE GENOMIC DNA]</scope>
    <source>
        <strain>Angola</strain>
    </source>
</reference>